<comment type="function">
    <text evidence="1">Binds 16S rRNA, required for the assembly of 30S particles.</text>
</comment>
<comment type="subunit">
    <text evidence="1">Part of the 30S ribosomal subunit.</text>
</comment>
<comment type="subcellular location">
    <subcellularLocation>
        <location>Plastid</location>
        <location>Chloroplast</location>
    </subcellularLocation>
</comment>
<comment type="RNA editing">
    <location>
        <position position="83" evidence="2"/>
    </location>
</comment>
<comment type="similarity">
    <text evidence="1">Belongs to the universal ribosomal protein uS14 family.</text>
</comment>
<feature type="chain" id="PRO_0000130964" description="Small ribosomal subunit protein uS14c">
    <location>
        <begin position="1"/>
        <end position="100"/>
    </location>
</feature>
<organism>
    <name type="scientific">Adiantum capillus-veneris</name>
    <name type="common">Maidenhair fern</name>
    <dbReference type="NCBI Taxonomy" id="13818"/>
    <lineage>
        <taxon>Eukaryota</taxon>
        <taxon>Viridiplantae</taxon>
        <taxon>Streptophyta</taxon>
        <taxon>Embryophyta</taxon>
        <taxon>Tracheophyta</taxon>
        <taxon>Polypodiopsida</taxon>
        <taxon>Polypodiidae</taxon>
        <taxon>Polypodiales</taxon>
        <taxon>Pteridineae</taxon>
        <taxon>Pteridaceae</taxon>
        <taxon>Vittarioideae</taxon>
        <taxon>Adiantum</taxon>
    </lineage>
</organism>
<protein>
    <recommendedName>
        <fullName evidence="1">Small ribosomal subunit protein uS14c</fullName>
    </recommendedName>
    <alternativeName>
        <fullName evidence="3">30S ribosomal protein S14, chloroplastic</fullName>
    </alternativeName>
</protein>
<accession>Q85FM1</accession>
<proteinExistence type="evidence at transcript level"/>
<dbReference type="EMBL" id="AY178864">
    <property type="protein sequence ID" value="AAP29390.2"/>
    <property type="molecule type" value="Genomic_DNA"/>
</dbReference>
<dbReference type="RefSeq" id="NP_848058.1">
    <property type="nucleotide sequence ID" value="NC_004766.1"/>
</dbReference>
<dbReference type="SMR" id="Q85FM1"/>
<dbReference type="GeneID" id="807409"/>
<dbReference type="GO" id="GO:0009507">
    <property type="term" value="C:chloroplast"/>
    <property type="evidence" value="ECO:0007669"/>
    <property type="project" value="UniProtKB-SubCell"/>
</dbReference>
<dbReference type="GO" id="GO:0015935">
    <property type="term" value="C:small ribosomal subunit"/>
    <property type="evidence" value="ECO:0007669"/>
    <property type="project" value="TreeGrafter"/>
</dbReference>
<dbReference type="GO" id="GO:0019843">
    <property type="term" value="F:rRNA binding"/>
    <property type="evidence" value="ECO:0007669"/>
    <property type="project" value="UniProtKB-UniRule"/>
</dbReference>
<dbReference type="GO" id="GO:0003735">
    <property type="term" value="F:structural constituent of ribosome"/>
    <property type="evidence" value="ECO:0007669"/>
    <property type="project" value="InterPro"/>
</dbReference>
<dbReference type="GO" id="GO:0006412">
    <property type="term" value="P:translation"/>
    <property type="evidence" value="ECO:0007669"/>
    <property type="project" value="UniProtKB-UniRule"/>
</dbReference>
<dbReference type="FunFam" id="1.10.287.1480:FF:000001">
    <property type="entry name" value="30S ribosomal protein S14"/>
    <property type="match status" value="1"/>
</dbReference>
<dbReference type="Gene3D" id="1.10.287.1480">
    <property type="match status" value="1"/>
</dbReference>
<dbReference type="HAMAP" id="MF_00537">
    <property type="entry name" value="Ribosomal_uS14_1"/>
    <property type="match status" value="1"/>
</dbReference>
<dbReference type="InterPro" id="IPR001209">
    <property type="entry name" value="Ribosomal_uS14"/>
</dbReference>
<dbReference type="InterPro" id="IPR023036">
    <property type="entry name" value="Ribosomal_uS14_bac/plastid"/>
</dbReference>
<dbReference type="InterPro" id="IPR018271">
    <property type="entry name" value="Ribosomal_uS14_CS"/>
</dbReference>
<dbReference type="NCBIfam" id="NF006477">
    <property type="entry name" value="PRK08881.1"/>
    <property type="match status" value="1"/>
</dbReference>
<dbReference type="PANTHER" id="PTHR19836">
    <property type="entry name" value="30S RIBOSOMAL PROTEIN S14"/>
    <property type="match status" value="1"/>
</dbReference>
<dbReference type="PANTHER" id="PTHR19836:SF19">
    <property type="entry name" value="SMALL RIBOSOMAL SUBUNIT PROTEIN US14M"/>
    <property type="match status" value="1"/>
</dbReference>
<dbReference type="Pfam" id="PF00253">
    <property type="entry name" value="Ribosomal_S14"/>
    <property type="match status" value="1"/>
</dbReference>
<dbReference type="SUPFAM" id="SSF57716">
    <property type="entry name" value="Glucocorticoid receptor-like (DNA-binding domain)"/>
    <property type="match status" value="1"/>
</dbReference>
<dbReference type="PROSITE" id="PS00527">
    <property type="entry name" value="RIBOSOMAL_S14"/>
    <property type="match status" value="1"/>
</dbReference>
<reference key="1">
    <citation type="journal article" date="2003" name="DNA Res.">
        <title>Complete nucleotide sequence of the chloroplast genome from a leptosporangiate fern, Adiantum capillus-veneris L.</title>
        <authorList>
            <person name="Wolf P.G."/>
            <person name="Rowe C.A."/>
            <person name="Sinclair R.B."/>
            <person name="Hasebe M."/>
        </authorList>
    </citation>
    <scope>NUCLEOTIDE SEQUENCE [LARGE SCALE GENOMIC DNA]</scope>
</reference>
<reference key="2">
    <citation type="journal article" date="2004" name="Gene">
        <title>High levels of RNA editing in a vascular plant chloroplast genome: analysis of transcripts from the fern Adiantum capillus-veneris.</title>
        <authorList>
            <person name="Wolf P.G."/>
            <person name="Rowe C.A."/>
            <person name="Hasebe M."/>
        </authorList>
    </citation>
    <scope>NUCLEOTIDE SEQUENCE [GENOMIC DNA]</scope>
    <scope>RNA EDITING</scope>
    <source>
        <tissue>Frond</tissue>
    </source>
</reference>
<sequence>MAKKSLIEKENSKKKLVKKYNLLRQFLRREIKNSLRIQDKLIISEKLQSLPRNSARVRLRNRCSLTGRPRSNYRDFGFSRHVLREMAHTCVLPGVLKSSW</sequence>
<name>RR14_ADICA</name>
<gene>
    <name evidence="1" type="primary">rps14</name>
</gene>
<keyword id="KW-0150">Chloroplast</keyword>
<keyword id="KW-0934">Plastid</keyword>
<keyword id="KW-0687">Ribonucleoprotein</keyword>
<keyword id="KW-0689">Ribosomal protein</keyword>
<keyword id="KW-0691">RNA editing</keyword>
<keyword id="KW-0694">RNA-binding</keyword>
<keyword id="KW-0699">rRNA-binding</keyword>
<geneLocation type="chloroplast"/>
<evidence type="ECO:0000255" key="1">
    <source>
        <dbReference type="HAMAP-Rule" id="MF_00537"/>
    </source>
</evidence>
<evidence type="ECO:0000269" key="2">
    <source>
    </source>
</evidence>
<evidence type="ECO:0000305" key="3"/>